<keyword id="KW-0131">Cell cycle</keyword>
<keyword id="KW-0132">Cell division</keyword>
<keyword id="KW-0143">Chaperone</keyword>
<keyword id="KW-0963">Cytoplasm</keyword>
<keyword id="KW-0413">Isomerase</keyword>
<keyword id="KW-1185">Reference proteome</keyword>
<keyword id="KW-0697">Rotamase</keyword>
<accession>Q2NDC7</accession>
<name>TIG_ERYLH</name>
<reference key="1">
    <citation type="journal article" date="2009" name="J. Bacteriol.">
        <title>Complete genome sequence of Erythrobacter litoralis HTCC2594.</title>
        <authorList>
            <person name="Oh H.M."/>
            <person name="Giovannoni S.J."/>
            <person name="Ferriera S."/>
            <person name="Johnson J."/>
            <person name="Cho J.C."/>
        </authorList>
    </citation>
    <scope>NUCLEOTIDE SEQUENCE [LARGE SCALE GENOMIC DNA]</scope>
    <source>
        <strain>HTCC2594</strain>
    </source>
</reference>
<sequence length="533" mass="58814">MQTKETTNEGLKRAYKLTLTAKEIDAKIDAEVKKVAPQVRMPGFRPGKVPANLVRKMHGEQMHAQVINDSIRDSVDALIKEKELRPAMQPKIDLNEDYEQGKDAVVSVSLEILPKVEAPSIDDLKLERLTVPVSDEQVMETIERIAGQNKSYKDAAKTRKAADGDQLIIDFTGSVDGVEFEGGKAEDAPLVLGSGTFIPGFEEQLKGVKTGDEKTITVTFPKDYQAENLAGKEAQFDVKVKQVKVETDTTIDDEFAANLGLENLDKLKELIRGQLEQETNGLTRTAMKRSLLDQLAAGHDFPVPEGMVDAEFEQIWNQLQQEAAQEEDPDKALKEIEAEKDDYRAIAERRVRLGLLLSEIGQANGVEISQQEMSMLTMQAAQQYREEDRERFMQFIQQDPMAAAQLRAPLYEDKVVDFLFDKAEVTDREVTREELEAAIEAEAEEEKKPAAKKKAPAKKAEPKKAAAKKAPAKKAPAKKAAAKDGDEKPAAKKAPAKKAPAKKASTKKPAEKKAPAKKPAAKKAPAKKPAAKK</sequence>
<proteinExistence type="inferred from homology"/>
<feature type="chain" id="PRO_1000022678" description="Trigger factor">
    <location>
        <begin position="1"/>
        <end position="533"/>
    </location>
</feature>
<feature type="domain" description="PPIase FKBP-type" evidence="1">
    <location>
        <begin position="164"/>
        <end position="249"/>
    </location>
</feature>
<feature type="region of interest" description="Disordered" evidence="2">
    <location>
        <begin position="436"/>
        <end position="533"/>
    </location>
</feature>
<feature type="compositionally biased region" description="Basic residues" evidence="2">
    <location>
        <begin position="465"/>
        <end position="477"/>
    </location>
</feature>
<feature type="compositionally biased region" description="Basic and acidic residues" evidence="2">
    <location>
        <begin position="481"/>
        <end position="490"/>
    </location>
</feature>
<feature type="compositionally biased region" description="Basic residues" evidence="2">
    <location>
        <begin position="494"/>
        <end position="506"/>
    </location>
</feature>
<feature type="compositionally biased region" description="Basic residues" evidence="2">
    <location>
        <begin position="515"/>
        <end position="533"/>
    </location>
</feature>
<evidence type="ECO:0000255" key="1">
    <source>
        <dbReference type="HAMAP-Rule" id="MF_00303"/>
    </source>
</evidence>
<evidence type="ECO:0000256" key="2">
    <source>
        <dbReference type="SAM" id="MobiDB-lite"/>
    </source>
</evidence>
<protein>
    <recommendedName>
        <fullName evidence="1">Trigger factor</fullName>
        <shortName evidence="1">TF</shortName>
        <ecNumber evidence="1">5.2.1.8</ecNumber>
    </recommendedName>
    <alternativeName>
        <fullName evidence="1">PPIase</fullName>
    </alternativeName>
</protein>
<organism>
    <name type="scientific">Erythrobacter litoralis (strain HTCC2594)</name>
    <dbReference type="NCBI Taxonomy" id="314225"/>
    <lineage>
        <taxon>Bacteria</taxon>
        <taxon>Pseudomonadati</taxon>
        <taxon>Pseudomonadota</taxon>
        <taxon>Alphaproteobacteria</taxon>
        <taxon>Sphingomonadales</taxon>
        <taxon>Erythrobacteraceae</taxon>
        <taxon>Erythrobacter/Porphyrobacter group</taxon>
        <taxon>Erythrobacter</taxon>
    </lineage>
</organism>
<dbReference type="EC" id="5.2.1.8" evidence="1"/>
<dbReference type="EMBL" id="CP000157">
    <property type="protein sequence ID" value="ABC62314.1"/>
    <property type="molecule type" value="Genomic_DNA"/>
</dbReference>
<dbReference type="RefSeq" id="WP_011413190.1">
    <property type="nucleotide sequence ID" value="NC_007722.1"/>
</dbReference>
<dbReference type="SMR" id="Q2NDC7"/>
<dbReference type="STRING" id="314225.ELI_01110"/>
<dbReference type="KEGG" id="eli:ELI_01110"/>
<dbReference type="eggNOG" id="COG0544">
    <property type="taxonomic scope" value="Bacteria"/>
</dbReference>
<dbReference type="HOGENOM" id="CLU_033058_2_2_5"/>
<dbReference type="OrthoDB" id="9767721at2"/>
<dbReference type="Proteomes" id="UP000008808">
    <property type="component" value="Chromosome"/>
</dbReference>
<dbReference type="GO" id="GO:0005737">
    <property type="term" value="C:cytoplasm"/>
    <property type="evidence" value="ECO:0007669"/>
    <property type="project" value="UniProtKB-SubCell"/>
</dbReference>
<dbReference type="GO" id="GO:0003755">
    <property type="term" value="F:peptidyl-prolyl cis-trans isomerase activity"/>
    <property type="evidence" value="ECO:0007669"/>
    <property type="project" value="UniProtKB-UniRule"/>
</dbReference>
<dbReference type="GO" id="GO:0044183">
    <property type="term" value="F:protein folding chaperone"/>
    <property type="evidence" value="ECO:0007669"/>
    <property type="project" value="TreeGrafter"/>
</dbReference>
<dbReference type="GO" id="GO:0043022">
    <property type="term" value="F:ribosome binding"/>
    <property type="evidence" value="ECO:0007669"/>
    <property type="project" value="TreeGrafter"/>
</dbReference>
<dbReference type="GO" id="GO:0051083">
    <property type="term" value="P:'de novo' cotranslational protein folding"/>
    <property type="evidence" value="ECO:0007669"/>
    <property type="project" value="TreeGrafter"/>
</dbReference>
<dbReference type="GO" id="GO:0051301">
    <property type="term" value="P:cell division"/>
    <property type="evidence" value="ECO:0007669"/>
    <property type="project" value="UniProtKB-KW"/>
</dbReference>
<dbReference type="GO" id="GO:0061077">
    <property type="term" value="P:chaperone-mediated protein folding"/>
    <property type="evidence" value="ECO:0007669"/>
    <property type="project" value="TreeGrafter"/>
</dbReference>
<dbReference type="GO" id="GO:0015031">
    <property type="term" value="P:protein transport"/>
    <property type="evidence" value="ECO:0007669"/>
    <property type="project" value="UniProtKB-UniRule"/>
</dbReference>
<dbReference type="GO" id="GO:0043335">
    <property type="term" value="P:protein unfolding"/>
    <property type="evidence" value="ECO:0007669"/>
    <property type="project" value="TreeGrafter"/>
</dbReference>
<dbReference type="FunFam" id="3.10.50.40:FF:000001">
    <property type="entry name" value="Trigger factor"/>
    <property type="match status" value="1"/>
</dbReference>
<dbReference type="Gene3D" id="3.10.50.40">
    <property type="match status" value="1"/>
</dbReference>
<dbReference type="Gene3D" id="3.30.70.1050">
    <property type="entry name" value="Trigger factor ribosome-binding domain"/>
    <property type="match status" value="1"/>
</dbReference>
<dbReference type="Gene3D" id="1.10.3120.10">
    <property type="entry name" value="Trigger factor, C-terminal domain"/>
    <property type="match status" value="1"/>
</dbReference>
<dbReference type="HAMAP" id="MF_00303">
    <property type="entry name" value="Trigger_factor_Tig"/>
    <property type="match status" value="1"/>
</dbReference>
<dbReference type="InterPro" id="IPR046357">
    <property type="entry name" value="PPIase_dom_sf"/>
</dbReference>
<dbReference type="InterPro" id="IPR001179">
    <property type="entry name" value="PPIase_FKBP_dom"/>
</dbReference>
<dbReference type="InterPro" id="IPR005215">
    <property type="entry name" value="Trig_fac"/>
</dbReference>
<dbReference type="InterPro" id="IPR008880">
    <property type="entry name" value="Trigger_fac_C"/>
</dbReference>
<dbReference type="InterPro" id="IPR037041">
    <property type="entry name" value="Trigger_fac_C_sf"/>
</dbReference>
<dbReference type="InterPro" id="IPR008881">
    <property type="entry name" value="Trigger_fac_ribosome-bd_bac"/>
</dbReference>
<dbReference type="InterPro" id="IPR036611">
    <property type="entry name" value="Trigger_fac_ribosome-bd_sf"/>
</dbReference>
<dbReference type="InterPro" id="IPR027304">
    <property type="entry name" value="Trigger_fact/SurA_dom_sf"/>
</dbReference>
<dbReference type="NCBIfam" id="TIGR00115">
    <property type="entry name" value="tig"/>
    <property type="match status" value="1"/>
</dbReference>
<dbReference type="PANTHER" id="PTHR30560">
    <property type="entry name" value="TRIGGER FACTOR CHAPERONE AND PEPTIDYL-PROLYL CIS/TRANS ISOMERASE"/>
    <property type="match status" value="1"/>
</dbReference>
<dbReference type="PANTHER" id="PTHR30560:SF3">
    <property type="entry name" value="TRIGGER FACTOR-LIKE PROTEIN TIG, CHLOROPLASTIC"/>
    <property type="match status" value="1"/>
</dbReference>
<dbReference type="Pfam" id="PF00254">
    <property type="entry name" value="FKBP_C"/>
    <property type="match status" value="1"/>
</dbReference>
<dbReference type="Pfam" id="PF05698">
    <property type="entry name" value="Trigger_C"/>
    <property type="match status" value="1"/>
</dbReference>
<dbReference type="Pfam" id="PF05697">
    <property type="entry name" value="Trigger_N"/>
    <property type="match status" value="1"/>
</dbReference>
<dbReference type="SUPFAM" id="SSF54534">
    <property type="entry name" value="FKBP-like"/>
    <property type="match status" value="1"/>
</dbReference>
<dbReference type="SUPFAM" id="SSF109998">
    <property type="entry name" value="Triger factor/SurA peptide-binding domain-like"/>
    <property type="match status" value="1"/>
</dbReference>
<dbReference type="SUPFAM" id="SSF102735">
    <property type="entry name" value="Trigger factor ribosome-binding domain"/>
    <property type="match status" value="1"/>
</dbReference>
<dbReference type="PROSITE" id="PS50059">
    <property type="entry name" value="FKBP_PPIASE"/>
    <property type="match status" value="1"/>
</dbReference>
<comment type="function">
    <text evidence="1">Involved in protein export. Acts as a chaperone by maintaining the newly synthesized protein in an open conformation. Functions as a peptidyl-prolyl cis-trans isomerase.</text>
</comment>
<comment type="catalytic activity">
    <reaction evidence="1">
        <text>[protein]-peptidylproline (omega=180) = [protein]-peptidylproline (omega=0)</text>
        <dbReference type="Rhea" id="RHEA:16237"/>
        <dbReference type="Rhea" id="RHEA-COMP:10747"/>
        <dbReference type="Rhea" id="RHEA-COMP:10748"/>
        <dbReference type="ChEBI" id="CHEBI:83833"/>
        <dbReference type="ChEBI" id="CHEBI:83834"/>
        <dbReference type="EC" id="5.2.1.8"/>
    </reaction>
</comment>
<comment type="subcellular location">
    <subcellularLocation>
        <location>Cytoplasm</location>
    </subcellularLocation>
    <text evidence="1">About half TF is bound to the ribosome near the polypeptide exit tunnel while the other half is free in the cytoplasm.</text>
</comment>
<comment type="domain">
    <text evidence="1">Consists of 3 domains; the N-terminus binds the ribosome, the middle domain has PPIase activity, while the C-terminus has intrinsic chaperone activity on its own.</text>
</comment>
<comment type="similarity">
    <text evidence="1">Belongs to the FKBP-type PPIase family. Tig subfamily.</text>
</comment>
<gene>
    <name evidence="1" type="primary">tig</name>
    <name type="ordered locus">ELI_01110</name>
</gene>